<reference key="1">
    <citation type="journal article" date="2002" name="Nucleic Acids Res.">
        <title>Genome sequence of Shigella flexneri 2a: insights into pathogenicity through comparison with genomes of Escherichia coli K12 and O157.</title>
        <authorList>
            <person name="Jin Q."/>
            <person name="Yuan Z."/>
            <person name="Xu J."/>
            <person name="Wang Y."/>
            <person name="Shen Y."/>
            <person name="Lu W."/>
            <person name="Wang J."/>
            <person name="Liu H."/>
            <person name="Yang J."/>
            <person name="Yang F."/>
            <person name="Zhang X."/>
            <person name="Zhang J."/>
            <person name="Yang G."/>
            <person name="Wu H."/>
            <person name="Qu D."/>
            <person name="Dong J."/>
            <person name="Sun L."/>
            <person name="Xue Y."/>
            <person name="Zhao A."/>
            <person name="Gao Y."/>
            <person name="Zhu J."/>
            <person name="Kan B."/>
            <person name="Ding K."/>
            <person name="Chen S."/>
            <person name="Cheng H."/>
            <person name="Yao Z."/>
            <person name="He B."/>
            <person name="Chen R."/>
            <person name="Ma D."/>
            <person name="Qiang B."/>
            <person name="Wen Y."/>
            <person name="Hou Y."/>
            <person name="Yu J."/>
        </authorList>
    </citation>
    <scope>NUCLEOTIDE SEQUENCE [LARGE SCALE GENOMIC DNA]</scope>
    <source>
        <strain>301 / Serotype 2a</strain>
    </source>
</reference>
<reference key="2">
    <citation type="journal article" date="2003" name="Infect. Immun.">
        <title>Complete genome sequence and comparative genomics of Shigella flexneri serotype 2a strain 2457T.</title>
        <authorList>
            <person name="Wei J."/>
            <person name="Goldberg M.B."/>
            <person name="Burland V."/>
            <person name="Venkatesan M.M."/>
            <person name="Deng W."/>
            <person name="Fournier G."/>
            <person name="Mayhew G.F."/>
            <person name="Plunkett G. III"/>
            <person name="Rose D.J."/>
            <person name="Darling A."/>
            <person name="Mau B."/>
            <person name="Perna N.T."/>
            <person name="Payne S.M."/>
            <person name="Runyen-Janecky L.J."/>
            <person name="Zhou S."/>
            <person name="Schwartz D.C."/>
            <person name="Blattner F.R."/>
        </authorList>
    </citation>
    <scope>NUCLEOTIDE SEQUENCE [LARGE SCALE GENOMIC DNA]</scope>
    <source>
        <strain>ATCC 700930 / 2457T / Serotype 2a</strain>
    </source>
</reference>
<feature type="chain" id="PRO_0000169532" description="Uncharacterized protein YhfU">
    <location>
        <begin position="1"/>
        <end position="117"/>
    </location>
</feature>
<comment type="sequence caution" evidence="1">
    <conflict type="erroneous initiation">
        <sequence resource="EMBL-CDS" id="AAN44858"/>
    </conflict>
</comment>
<comment type="sequence caution" evidence="1">
    <conflict type="erroneous initiation">
        <sequence resource="EMBL-CDS" id="AAP19320"/>
    </conflict>
</comment>
<evidence type="ECO:0000305" key="1"/>
<protein>
    <recommendedName>
        <fullName>Uncharacterized protein YhfU</fullName>
    </recommendedName>
</protein>
<dbReference type="EMBL" id="AE005674">
    <property type="protein sequence ID" value="AAN44858.1"/>
    <property type="status" value="ALT_INIT"/>
    <property type="molecule type" value="Genomic_DNA"/>
</dbReference>
<dbReference type="EMBL" id="AE014073">
    <property type="protein sequence ID" value="AAP19320.1"/>
    <property type="status" value="ALT_INIT"/>
    <property type="molecule type" value="Genomic_DNA"/>
</dbReference>
<dbReference type="RefSeq" id="NP_709151.1">
    <property type="nucleotide sequence ID" value="NC_004337.2"/>
</dbReference>
<dbReference type="RefSeq" id="WP_000719728.1">
    <property type="nucleotide sequence ID" value="NZ_WPGW01000003.1"/>
</dbReference>
<dbReference type="SMR" id="P64633"/>
<dbReference type="STRING" id="198214.SF3396"/>
<dbReference type="PaxDb" id="198214-SF3396"/>
<dbReference type="GeneID" id="1024062"/>
<dbReference type="KEGG" id="sfl:SF3396"/>
<dbReference type="KEGG" id="sfx:S4366"/>
<dbReference type="PATRIC" id="fig|198214.7.peg.4009"/>
<dbReference type="HOGENOM" id="CLU_133709_0_0_6"/>
<dbReference type="Proteomes" id="UP000001006">
    <property type="component" value="Chromosome"/>
</dbReference>
<dbReference type="Proteomes" id="UP000002673">
    <property type="component" value="Chromosome"/>
</dbReference>
<dbReference type="InterPro" id="IPR021238">
    <property type="entry name" value="DUF2620"/>
</dbReference>
<dbReference type="Pfam" id="PF10941">
    <property type="entry name" value="DUF2620"/>
    <property type="match status" value="1"/>
</dbReference>
<gene>
    <name type="primary">yhfU</name>
    <name type="ordered locus">SF3396</name>
    <name type="ordered locus">S4366</name>
</gene>
<name>YHFU_SHIFL</name>
<accession>P64633</accession>
<accession>P45547</accession>
<organism>
    <name type="scientific">Shigella flexneri</name>
    <dbReference type="NCBI Taxonomy" id="623"/>
    <lineage>
        <taxon>Bacteria</taxon>
        <taxon>Pseudomonadati</taxon>
        <taxon>Pseudomonadota</taxon>
        <taxon>Gammaproteobacteria</taxon>
        <taxon>Enterobacterales</taxon>
        <taxon>Enterobacteriaceae</taxon>
        <taxon>Shigella</taxon>
    </lineage>
</organism>
<sequence>MKKIGVAGLQREQIKKTIEATAPGCFEVFIHNDMEAAMKVKSGQLDYYIGACNTGAGAALSIAIAVIGYNKSCTIAKPGIKAKDEHIAKMIAEGKVAFGLSVEHVEHAIPMLINHLK</sequence>
<keyword id="KW-1185">Reference proteome</keyword>
<proteinExistence type="predicted"/>